<name>PERC_DROME</name>
<dbReference type="EC" id="1.11.1.7"/>
<dbReference type="EMBL" id="AF238306">
    <property type="protein sequence ID" value="AAF78217.1"/>
    <property type="status" value="ALT_SEQ"/>
    <property type="molecule type" value="mRNA"/>
</dbReference>
<dbReference type="EMBL" id="AE014297">
    <property type="protein sequence ID" value="AAN13751.2"/>
    <property type="molecule type" value="Genomic_DNA"/>
</dbReference>
<dbReference type="EMBL" id="AY119616">
    <property type="protein sequence ID" value="AAM50270.1"/>
    <property type="molecule type" value="mRNA"/>
</dbReference>
<dbReference type="RefSeq" id="NP_650648.3">
    <property type="nucleotide sequence ID" value="NM_142391.5"/>
</dbReference>
<dbReference type="SMR" id="Q9VEG6"/>
<dbReference type="BioGRID" id="67163">
    <property type="interactions" value="15"/>
</dbReference>
<dbReference type="FunCoup" id="Q9VEG6">
    <property type="interactions" value="23"/>
</dbReference>
<dbReference type="IntAct" id="Q9VEG6">
    <property type="interactions" value="1"/>
</dbReference>
<dbReference type="STRING" id="7227.FBpp0082932"/>
<dbReference type="PeroxiBase" id="3552">
    <property type="entry name" value="DmPxt01-A"/>
</dbReference>
<dbReference type="PeroxiBase" id="3553">
    <property type="entry name" value="DmPxt01-B"/>
</dbReference>
<dbReference type="GlyCosmos" id="Q9VEG6">
    <property type="glycosylation" value="1 site, No reported glycans"/>
</dbReference>
<dbReference type="GlyGen" id="Q9VEG6">
    <property type="glycosylation" value="1 site"/>
</dbReference>
<dbReference type="PaxDb" id="7227-FBpp0082932"/>
<dbReference type="EnsemblMetazoa" id="FBtr0083508">
    <property type="protein sequence ID" value="FBpp0082932"/>
    <property type="gene ID" value="FBgn0261987"/>
</dbReference>
<dbReference type="GeneID" id="42131"/>
<dbReference type="KEGG" id="dme:Dmel_CG7660"/>
<dbReference type="UCSC" id="CG7660-RB">
    <property type="organism name" value="d. melanogaster"/>
</dbReference>
<dbReference type="AGR" id="FB:FBgn0261987"/>
<dbReference type="CTD" id="42131"/>
<dbReference type="FlyBase" id="FBgn0261987">
    <property type="gene designation" value="Pxt"/>
</dbReference>
<dbReference type="VEuPathDB" id="VectorBase:FBgn0261987"/>
<dbReference type="eggNOG" id="KOG2408">
    <property type="taxonomic scope" value="Eukaryota"/>
</dbReference>
<dbReference type="HOGENOM" id="CLU_006087_5_0_1"/>
<dbReference type="InParanoid" id="Q9VEG6"/>
<dbReference type="OMA" id="IQCPAHV"/>
<dbReference type="OrthoDB" id="823504at2759"/>
<dbReference type="PhylomeDB" id="Q9VEG6"/>
<dbReference type="SignaLink" id="Q9VEG6"/>
<dbReference type="BioGRID-ORCS" id="42131">
    <property type="hits" value="0 hits in 1 CRISPR screen"/>
</dbReference>
<dbReference type="GenomeRNAi" id="42131"/>
<dbReference type="PRO" id="PR:Q9VEG6"/>
<dbReference type="Proteomes" id="UP000000803">
    <property type="component" value="Chromosome 3R"/>
</dbReference>
<dbReference type="Bgee" id="FBgn0261987">
    <property type="expression patterns" value="Expressed in secondary oocyte and 29 other cell types or tissues"/>
</dbReference>
<dbReference type="GO" id="GO:0005615">
    <property type="term" value="C:extracellular space"/>
    <property type="evidence" value="ECO:0000314"/>
    <property type="project" value="UniProtKB"/>
</dbReference>
<dbReference type="GO" id="GO:0020037">
    <property type="term" value="F:heme binding"/>
    <property type="evidence" value="ECO:0007669"/>
    <property type="project" value="InterPro"/>
</dbReference>
<dbReference type="GO" id="GO:0140825">
    <property type="term" value="F:lactoperoxidase activity"/>
    <property type="evidence" value="ECO:0007669"/>
    <property type="project" value="UniProtKB-EC"/>
</dbReference>
<dbReference type="GO" id="GO:0046872">
    <property type="term" value="F:metal ion binding"/>
    <property type="evidence" value="ECO:0007669"/>
    <property type="project" value="UniProtKB-KW"/>
</dbReference>
<dbReference type="GO" id="GO:0004601">
    <property type="term" value="F:peroxidase activity"/>
    <property type="evidence" value="ECO:0000250"/>
    <property type="project" value="UniProtKB"/>
</dbReference>
<dbReference type="GO" id="GO:0007304">
    <property type="term" value="P:chorion-containing eggshell formation"/>
    <property type="evidence" value="ECO:0000315"/>
    <property type="project" value="FlyBase"/>
</dbReference>
<dbReference type="GO" id="GO:0007306">
    <property type="term" value="P:egg chorion assembly"/>
    <property type="evidence" value="ECO:0000250"/>
    <property type="project" value="UniProtKB"/>
</dbReference>
<dbReference type="GO" id="GO:0030707">
    <property type="term" value="P:follicle cell of egg chamber development"/>
    <property type="evidence" value="ECO:0000315"/>
    <property type="project" value="UniProtKB"/>
</dbReference>
<dbReference type="GO" id="GO:0042744">
    <property type="term" value="P:hydrogen peroxide catabolic process"/>
    <property type="evidence" value="ECO:0007669"/>
    <property type="project" value="UniProtKB-KW"/>
</dbReference>
<dbReference type="GO" id="GO:0042743">
    <property type="term" value="P:hydrogen peroxide metabolic process"/>
    <property type="evidence" value="ECO:0000250"/>
    <property type="project" value="UniProtKB"/>
</dbReference>
<dbReference type="GO" id="GO:0001516">
    <property type="term" value="P:prostaglandin biosynthetic process"/>
    <property type="evidence" value="ECO:0000315"/>
    <property type="project" value="FlyBase"/>
</dbReference>
<dbReference type="GO" id="GO:0006979">
    <property type="term" value="P:response to oxidative stress"/>
    <property type="evidence" value="ECO:0007669"/>
    <property type="project" value="InterPro"/>
</dbReference>
<dbReference type="CDD" id="cd09823">
    <property type="entry name" value="peroxinectin_like"/>
    <property type="match status" value="1"/>
</dbReference>
<dbReference type="FunFam" id="1.10.640.10:FF:000003">
    <property type="entry name" value="chorion peroxidase"/>
    <property type="match status" value="1"/>
</dbReference>
<dbReference type="Gene3D" id="1.10.640.10">
    <property type="entry name" value="Haem peroxidase domain superfamily, animal type"/>
    <property type="match status" value="1"/>
</dbReference>
<dbReference type="InterPro" id="IPR019791">
    <property type="entry name" value="Haem_peroxidase_animal"/>
</dbReference>
<dbReference type="InterPro" id="IPR010255">
    <property type="entry name" value="Haem_peroxidase_sf"/>
</dbReference>
<dbReference type="InterPro" id="IPR037120">
    <property type="entry name" value="Haem_peroxidase_sf_animal"/>
</dbReference>
<dbReference type="PANTHER" id="PTHR11475:SF4">
    <property type="entry name" value="CHORION PEROXIDASE"/>
    <property type="match status" value="1"/>
</dbReference>
<dbReference type="PANTHER" id="PTHR11475">
    <property type="entry name" value="OXIDASE/PEROXIDASE"/>
    <property type="match status" value="1"/>
</dbReference>
<dbReference type="Pfam" id="PF03098">
    <property type="entry name" value="An_peroxidase"/>
    <property type="match status" value="1"/>
</dbReference>
<dbReference type="PRINTS" id="PR00457">
    <property type="entry name" value="ANPEROXIDASE"/>
</dbReference>
<dbReference type="SUPFAM" id="SSF48113">
    <property type="entry name" value="Heme-dependent peroxidases"/>
    <property type="match status" value="1"/>
</dbReference>
<dbReference type="PROSITE" id="PS50292">
    <property type="entry name" value="PEROXIDASE_3"/>
    <property type="match status" value="1"/>
</dbReference>
<comment type="function">
    <text evidence="10">Required for ovarian follicle maturation. Involved in the formation of a rigid and insoluble egg chorion by catalyzing chorion protein cross-linking through dityrosine formation and phenol oxidase-catalyzed chorion melanization.</text>
</comment>
<comment type="catalytic activity">
    <reaction>
        <text>2 a phenolic donor + H2O2 = 2 a phenolic radical donor + 2 H2O</text>
        <dbReference type="Rhea" id="RHEA:56136"/>
        <dbReference type="ChEBI" id="CHEBI:15377"/>
        <dbReference type="ChEBI" id="CHEBI:16240"/>
        <dbReference type="ChEBI" id="CHEBI:139520"/>
        <dbReference type="ChEBI" id="CHEBI:139521"/>
        <dbReference type="EC" id="1.11.1.7"/>
    </reaction>
</comment>
<comment type="cofactor">
    <cofactor evidence="1">
        <name>heme b</name>
        <dbReference type="ChEBI" id="CHEBI:60344"/>
    </cofactor>
    <text evidence="1">Binds 1 heme b (iron(II)-protoporphyrin IX) group per heterodimer.</text>
</comment>
<comment type="subunit">
    <text evidence="2 11">Heterodimer.</text>
</comment>
<comment type="subcellular location">
    <subcellularLocation>
        <location evidence="10">Secreted</location>
    </subcellularLocation>
    <text>In the chorion layer of the mature eggs.</text>
</comment>
<comment type="tissue specificity">
    <text evidence="10">Expressed at low levels in the germarium and early follicles. Expression becomes progressively stronger during vitellogenesis, and is highly expressed in germ cells and somatic cells. A subset of follicle cells, termed border cells (BC), exhibit a high level of expression.</text>
</comment>
<comment type="developmental stage">
    <text evidence="8">Expressed both maternally and zygotically.</text>
</comment>
<comment type="disruption phenotype">
    <text evidence="10">Females are sterile, and maturing follicles show defects in actin filament formation, nurse cell membrane stability and border cell migration.</text>
</comment>
<comment type="similarity">
    <text evidence="5">Belongs to the peroxidase family. XPO subfamily.</text>
</comment>
<comment type="sequence caution" evidence="11">
    <conflict type="erroneous termination">
        <sequence resource="EMBL-CDS" id="AAF78217"/>
    </conflict>
    <text>Extended C-terminus.</text>
</comment>
<comment type="sequence caution" evidence="11">
    <conflict type="frameshift">
        <sequence resource="EMBL-CDS" id="AAF78217"/>
    </conflict>
</comment>
<sequence length="809" mass="90539">MSRILFILLLLIVTQLSELQAAAFSVRQNRFDEVPDLQTPAPLATSTESSKKPEKATSGLLKKCLPCSDGIRCVPQIQCPAHVRMESHEKPQICDLPAGKFGYCCETGQNHTAPKPETSPKERRSGFPTILSPAVLDEARRNFEHLMHGVAQIPVRRGFPDFAHGLVFHSTAKDDLHNFAISNSAIEQVMTTQLFGKKEQVPVEDFITNNVPIKFTETPLAHHCQPPPVCGNIRSVYRSMDGTCNNPEPQRSLWGAAGQPMERMLPPAYEDGIWTPRAHSSDGTPLLGARKISRTLLSDVDRPHPKYNLMVMQFGQVLAHDISQTSSIRLEDGSLVQCCSPEGKVALSPQQSHFACMPIHVEPDDEFFSAFGVRCLNFVRLSLVPSPDCQLSYGKQLTKVTHFVDASPVYGSSDEASRSLRAFRGGRLRMMNDFGRDLLPLTNDKKACPSEEAGKSCFHSGDGRTNQIISLITLQILLAREHNRVAGALHELNPSASDETLFQEARRIVIAEMQHITYNEFLPIIIGPQQMKRFRLVPLHQGYSHDYNVNVNPAITNEFSGAAYRMGHSSVDGKFQIRQEHGRIDEVVNIPDVMFNPSRMRKREFYDDMLRTLYSQPMQQVDSSISQGLSRFLFRGDNPFGLDLAAINIQRGRDQGLRSYNDYLELMGAPKLHSFEQFPIEIAQKLSRVYRTPDDIDLWVGGLLEKAVEGGVVGVTFAEIIADQFARFKQGDRYYYEYDNGINPGAFNPLQLQEIRKVTLARLLCDNSDRLTLQAVPLAAFVRADHPGNQMIGCDDPNLPSVNLEAWRA</sequence>
<accession>Q9VEG6</accession>
<accession>Q8IN93</accession>
<accession>Q8MRH7</accession>
<accession>Q9NBX0</accession>
<evidence type="ECO:0000250" key="1"/>
<evidence type="ECO:0000250" key="2">
    <source>
        <dbReference type="UniProtKB" id="P05164"/>
    </source>
</evidence>
<evidence type="ECO:0000250" key="3">
    <source>
        <dbReference type="UniProtKB" id="P82600"/>
    </source>
</evidence>
<evidence type="ECO:0000255" key="4"/>
<evidence type="ECO:0000255" key="5">
    <source>
        <dbReference type="PROSITE-ProRule" id="PRU00298"/>
    </source>
</evidence>
<evidence type="ECO:0000256" key="6">
    <source>
        <dbReference type="SAM" id="MobiDB-lite"/>
    </source>
</evidence>
<evidence type="ECO:0000269" key="7">
    <source>
    </source>
</evidence>
<evidence type="ECO:0000269" key="8">
    <source>
    </source>
</evidence>
<evidence type="ECO:0000269" key="9">
    <source>
    </source>
</evidence>
<evidence type="ECO:0000269" key="10">
    <source>
    </source>
</evidence>
<evidence type="ECO:0000305" key="11"/>
<evidence type="ECO:0000312" key="12">
    <source>
        <dbReference type="EMBL" id="AAF78217.1"/>
    </source>
</evidence>
<evidence type="ECO:0000312" key="13">
    <source>
        <dbReference type="EMBL" id="AAM50270.1"/>
    </source>
</evidence>
<evidence type="ECO:0000312" key="14">
    <source>
        <dbReference type="EMBL" id="AAN13751.2"/>
    </source>
</evidence>
<protein>
    <recommendedName>
        <fullName>Chorion peroxidase</fullName>
        <ecNumber>1.11.1.7</ecNumber>
    </recommendedName>
    <alternativeName>
        <fullName>Peroxinectin-related protein</fullName>
        <shortName>Dpxt</shortName>
    </alternativeName>
</protein>
<keyword id="KW-0007">Acetylation</keyword>
<keyword id="KW-1015">Disulfide bond</keyword>
<keyword id="KW-0325">Glycoprotein</keyword>
<keyword id="KW-0349">Heme</keyword>
<keyword id="KW-0376">Hydrogen peroxide</keyword>
<keyword id="KW-0408">Iron</keyword>
<keyword id="KW-0479">Metal-binding</keyword>
<keyword id="KW-0560">Oxidoreductase</keyword>
<keyword id="KW-0575">Peroxidase</keyword>
<keyword id="KW-1185">Reference proteome</keyword>
<keyword id="KW-0964">Secreted</keyword>
<keyword id="KW-0732">Signal</keyword>
<organism>
    <name type="scientific">Drosophila melanogaster</name>
    <name type="common">Fruit fly</name>
    <dbReference type="NCBI Taxonomy" id="7227"/>
    <lineage>
        <taxon>Eukaryota</taxon>
        <taxon>Metazoa</taxon>
        <taxon>Ecdysozoa</taxon>
        <taxon>Arthropoda</taxon>
        <taxon>Hexapoda</taxon>
        <taxon>Insecta</taxon>
        <taxon>Pterygota</taxon>
        <taxon>Neoptera</taxon>
        <taxon>Endopterygota</taxon>
        <taxon>Diptera</taxon>
        <taxon>Brachycera</taxon>
        <taxon>Muscomorpha</taxon>
        <taxon>Ephydroidea</taxon>
        <taxon>Drosophilidae</taxon>
        <taxon>Drosophila</taxon>
        <taxon>Sophophora</taxon>
    </lineage>
</organism>
<proteinExistence type="evidence at transcript level"/>
<reference evidence="11 12" key="1">
    <citation type="journal article" date="2002" name="Dev. Genes Evol.">
        <title>A new peroxinectin-like gene preferentially expressed during oogenesis and early embryogenesis in Drosophila melanogaster.</title>
        <authorList>
            <person name="Vazquez M."/>
            <person name="Rodriguez R."/>
            <person name="Zurita M."/>
        </authorList>
    </citation>
    <scope>NUCLEOTIDE SEQUENCE [MRNA]</scope>
    <scope>DEVELOPMENTAL STAGE</scope>
</reference>
<reference evidence="14" key="2">
    <citation type="journal article" date="2000" name="Science">
        <title>The genome sequence of Drosophila melanogaster.</title>
        <authorList>
            <person name="Adams M.D."/>
            <person name="Celniker S.E."/>
            <person name="Holt R.A."/>
            <person name="Evans C.A."/>
            <person name="Gocayne J.D."/>
            <person name="Amanatides P.G."/>
            <person name="Scherer S.E."/>
            <person name="Li P.W."/>
            <person name="Hoskins R.A."/>
            <person name="Galle R.F."/>
            <person name="George R.A."/>
            <person name="Lewis S.E."/>
            <person name="Richards S."/>
            <person name="Ashburner M."/>
            <person name="Henderson S.N."/>
            <person name="Sutton G.G."/>
            <person name="Wortman J.R."/>
            <person name="Yandell M.D."/>
            <person name="Zhang Q."/>
            <person name="Chen L.X."/>
            <person name="Brandon R.C."/>
            <person name="Rogers Y.-H.C."/>
            <person name="Blazej R.G."/>
            <person name="Champe M."/>
            <person name="Pfeiffer B.D."/>
            <person name="Wan K.H."/>
            <person name="Doyle C."/>
            <person name="Baxter E.G."/>
            <person name="Helt G."/>
            <person name="Nelson C.R."/>
            <person name="Miklos G.L.G."/>
            <person name="Abril J.F."/>
            <person name="Agbayani A."/>
            <person name="An H.-J."/>
            <person name="Andrews-Pfannkoch C."/>
            <person name="Baldwin D."/>
            <person name="Ballew R.M."/>
            <person name="Basu A."/>
            <person name="Baxendale J."/>
            <person name="Bayraktaroglu L."/>
            <person name="Beasley E.M."/>
            <person name="Beeson K.Y."/>
            <person name="Benos P.V."/>
            <person name="Berman B.P."/>
            <person name="Bhandari D."/>
            <person name="Bolshakov S."/>
            <person name="Borkova D."/>
            <person name="Botchan M.R."/>
            <person name="Bouck J."/>
            <person name="Brokstein P."/>
            <person name="Brottier P."/>
            <person name="Burtis K.C."/>
            <person name="Busam D.A."/>
            <person name="Butler H."/>
            <person name="Cadieu E."/>
            <person name="Center A."/>
            <person name="Chandra I."/>
            <person name="Cherry J.M."/>
            <person name="Cawley S."/>
            <person name="Dahlke C."/>
            <person name="Davenport L.B."/>
            <person name="Davies P."/>
            <person name="de Pablos B."/>
            <person name="Delcher A."/>
            <person name="Deng Z."/>
            <person name="Mays A.D."/>
            <person name="Dew I."/>
            <person name="Dietz S.M."/>
            <person name="Dodson K."/>
            <person name="Doup L.E."/>
            <person name="Downes M."/>
            <person name="Dugan-Rocha S."/>
            <person name="Dunkov B.C."/>
            <person name="Dunn P."/>
            <person name="Durbin K.J."/>
            <person name="Evangelista C.C."/>
            <person name="Ferraz C."/>
            <person name="Ferriera S."/>
            <person name="Fleischmann W."/>
            <person name="Fosler C."/>
            <person name="Gabrielian A.E."/>
            <person name="Garg N.S."/>
            <person name="Gelbart W.M."/>
            <person name="Glasser K."/>
            <person name="Glodek A."/>
            <person name="Gong F."/>
            <person name="Gorrell J.H."/>
            <person name="Gu Z."/>
            <person name="Guan P."/>
            <person name="Harris M."/>
            <person name="Harris N.L."/>
            <person name="Harvey D.A."/>
            <person name="Heiman T.J."/>
            <person name="Hernandez J.R."/>
            <person name="Houck J."/>
            <person name="Hostin D."/>
            <person name="Houston K.A."/>
            <person name="Howland T.J."/>
            <person name="Wei M.-H."/>
            <person name="Ibegwam C."/>
            <person name="Jalali M."/>
            <person name="Kalush F."/>
            <person name="Karpen G.H."/>
            <person name="Ke Z."/>
            <person name="Kennison J.A."/>
            <person name="Ketchum K.A."/>
            <person name="Kimmel B.E."/>
            <person name="Kodira C.D."/>
            <person name="Kraft C.L."/>
            <person name="Kravitz S."/>
            <person name="Kulp D."/>
            <person name="Lai Z."/>
            <person name="Lasko P."/>
            <person name="Lei Y."/>
            <person name="Levitsky A.A."/>
            <person name="Li J.H."/>
            <person name="Li Z."/>
            <person name="Liang Y."/>
            <person name="Lin X."/>
            <person name="Liu X."/>
            <person name="Mattei B."/>
            <person name="McIntosh T.C."/>
            <person name="McLeod M.P."/>
            <person name="McPherson D."/>
            <person name="Merkulov G."/>
            <person name="Milshina N.V."/>
            <person name="Mobarry C."/>
            <person name="Morris J."/>
            <person name="Moshrefi A."/>
            <person name="Mount S.M."/>
            <person name="Moy M."/>
            <person name="Murphy B."/>
            <person name="Murphy L."/>
            <person name="Muzny D.M."/>
            <person name="Nelson D.L."/>
            <person name="Nelson D.R."/>
            <person name="Nelson K.A."/>
            <person name="Nixon K."/>
            <person name="Nusskern D.R."/>
            <person name="Pacleb J.M."/>
            <person name="Palazzolo M."/>
            <person name="Pittman G.S."/>
            <person name="Pan S."/>
            <person name="Pollard J."/>
            <person name="Puri V."/>
            <person name="Reese M.G."/>
            <person name="Reinert K."/>
            <person name="Remington K."/>
            <person name="Saunders R.D.C."/>
            <person name="Scheeler F."/>
            <person name="Shen H."/>
            <person name="Shue B.C."/>
            <person name="Siden-Kiamos I."/>
            <person name="Simpson M."/>
            <person name="Skupski M.P."/>
            <person name="Smith T.J."/>
            <person name="Spier E."/>
            <person name="Spradling A.C."/>
            <person name="Stapleton M."/>
            <person name="Strong R."/>
            <person name="Sun E."/>
            <person name="Svirskas R."/>
            <person name="Tector C."/>
            <person name="Turner R."/>
            <person name="Venter E."/>
            <person name="Wang A.H."/>
            <person name="Wang X."/>
            <person name="Wang Z.-Y."/>
            <person name="Wassarman D.A."/>
            <person name="Weinstock G.M."/>
            <person name="Weissenbach J."/>
            <person name="Williams S.M."/>
            <person name="Woodage T."/>
            <person name="Worley K.C."/>
            <person name="Wu D."/>
            <person name="Yang S."/>
            <person name="Yao Q.A."/>
            <person name="Ye J."/>
            <person name="Yeh R.-F."/>
            <person name="Zaveri J.S."/>
            <person name="Zhan M."/>
            <person name="Zhang G."/>
            <person name="Zhao Q."/>
            <person name="Zheng L."/>
            <person name="Zheng X.H."/>
            <person name="Zhong F.N."/>
            <person name="Zhong W."/>
            <person name="Zhou X."/>
            <person name="Zhu S.C."/>
            <person name="Zhu X."/>
            <person name="Smith H.O."/>
            <person name="Gibbs R.A."/>
            <person name="Myers E.W."/>
            <person name="Rubin G.M."/>
            <person name="Venter J.C."/>
        </authorList>
    </citation>
    <scope>NUCLEOTIDE SEQUENCE [LARGE SCALE GENOMIC DNA]</scope>
    <source>
        <strain evidence="7">Berkeley</strain>
    </source>
</reference>
<reference evidence="11 14" key="3">
    <citation type="journal article" date="2002" name="Genome Biol.">
        <title>Annotation of the Drosophila melanogaster euchromatic genome: a systematic review.</title>
        <authorList>
            <person name="Misra S."/>
            <person name="Crosby M.A."/>
            <person name="Mungall C.J."/>
            <person name="Matthews B.B."/>
            <person name="Campbell K.S."/>
            <person name="Hradecky P."/>
            <person name="Huang Y."/>
            <person name="Kaminker J.S."/>
            <person name="Millburn G.H."/>
            <person name="Prochnik S.E."/>
            <person name="Smith C.D."/>
            <person name="Tupy J.L."/>
            <person name="Whitfield E.J."/>
            <person name="Bayraktaroglu L."/>
            <person name="Berman B.P."/>
            <person name="Bettencourt B.R."/>
            <person name="Celniker S.E."/>
            <person name="de Grey A.D.N.J."/>
            <person name="Drysdale R.A."/>
            <person name="Harris N.L."/>
            <person name="Richter J."/>
            <person name="Russo S."/>
            <person name="Schroeder A.J."/>
            <person name="Shu S.Q."/>
            <person name="Stapleton M."/>
            <person name="Yamada C."/>
            <person name="Ashburner M."/>
            <person name="Gelbart W.M."/>
            <person name="Rubin G.M."/>
            <person name="Lewis S.E."/>
        </authorList>
    </citation>
    <scope>GENOME REANNOTATION</scope>
    <source>
        <strain>Berkeley</strain>
    </source>
</reference>
<reference evidence="11 13" key="4">
    <citation type="journal article" date="2002" name="Genome Biol.">
        <title>A Drosophila full-length cDNA resource.</title>
        <authorList>
            <person name="Stapleton M."/>
            <person name="Carlson J.W."/>
            <person name="Brokstein P."/>
            <person name="Yu C."/>
            <person name="Champe M."/>
            <person name="George R.A."/>
            <person name="Guarin H."/>
            <person name="Kronmiller B."/>
            <person name="Pacleb J.M."/>
            <person name="Park S."/>
            <person name="Wan K.H."/>
            <person name="Rubin G.M."/>
            <person name="Celniker S.E."/>
        </authorList>
    </citation>
    <scope>NUCLEOTIDE SEQUENCE [LARGE SCALE MRNA]</scope>
    <source>
        <strain evidence="13">Berkeley</strain>
        <tissue evidence="9">Embryo</tissue>
    </source>
</reference>
<reference key="5">
    <citation type="journal article" date="2008" name="Development">
        <title>Drosophila Pxt: a cyclooxygenase-like facilitator of follicle maturation.</title>
        <authorList>
            <person name="Tootle T.L."/>
            <person name="Spradling A.C."/>
        </authorList>
    </citation>
    <scope>FUNCTION</scope>
    <scope>SUBCELLULAR LOCATION</scope>
    <scope>TISSUE SPECIFICITY</scope>
    <scope>DISRUPTION PHENOTYPE</scope>
</reference>
<gene>
    <name type="primary">Pxt</name>
    <name type="ORF">CG7660</name>
</gene>
<feature type="signal peptide" evidence="4">
    <location>
        <begin position="1"/>
        <end position="21"/>
    </location>
</feature>
<feature type="propeptide" id="PRO_0000232898" evidence="3">
    <location>
        <begin position="22"/>
        <end position="223"/>
    </location>
</feature>
<feature type="chain" id="PRO_0000407856" description="Chorion peroxidase">
    <location>
        <begin position="224"/>
        <end position="809"/>
    </location>
</feature>
<feature type="region of interest" description="Disordered" evidence="6">
    <location>
        <begin position="36"/>
        <end position="55"/>
    </location>
</feature>
<feature type="active site" description="Proton acceptor" evidence="2 5">
    <location>
        <position position="320"/>
    </location>
</feature>
<feature type="binding site" description="axial binding residue" evidence="2 5">
    <location>
        <position position="568"/>
    </location>
    <ligand>
        <name>heme b</name>
        <dbReference type="ChEBI" id="CHEBI:60344"/>
    </ligand>
    <ligandPart>
        <name>Fe</name>
        <dbReference type="ChEBI" id="CHEBI:18248"/>
    </ligandPart>
</feature>
<feature type="site" description="Transition state stabilizer" evidence="2 5">
    <location>
        <position position="464"/>
    </location>
</feature>
<feature type="modified residue" description="N-acetylcysteine; in Chorion peroxidase light chain" evidence="1">
    <location>
        <position position="224"/>
    </location>
</feature>
<feature type="glycosylation site" description="N-linked (GlcNAc...) asparagine" evidence="4">
    <location>
        <position position="110"/>
    </location>
</feature>
<feature type="disulfide bond" evidence="2 5">
    <location>
        <begin position="230"/>
        <end position="244"/>
    </location>
</feature>
<feature type="disulfide bond" evidence="2 5">
    <location>
        <begin position="448"/>
        <end position="457"/>
    </location>
</feature>
<feature type="disulfide bond" evidence="5">
    <location>
        <begin position="765"/>
        <end position="794"/>
    </location>
</feature>
<feature type="sequence conflict" description="In Ref. 1; AAF78217." evidence="11" ref="1">
    <original>L</original>
    <variation>F</variation>
    <location>
        <position position="287"/>
    </location>
</feature>
<feature type="sequence conflict" description="In Ref. 1; AAF78217." evidence="11" ref="1">
    <original>P</original>
    <variation>R</variation>
    <location>
        <position position="358"/>
    </location>
</feature>
<feature type="sequence conflict" description="In Ref. 1; AAF78217." evidence="11" ref="1">
    <original>LR</original>
    <variation>FG</variation>
    <location>
        <begin position="428"/>
        <end position="429"/>
    </location>
</feature>
<feature type="sequence conflict" description="In Ref. 1; AAF78217." evidence="11" ref="1">
    <original>NDKKACPSEEAGKSCFHS</original>
    <variation>KSLLSNVFLIIKILNNILTLRCYSLLLLPLLLMRFFFLLHL</variation>
    <location>
        <begin position="443"/>
        <end position="460"/>
    </location>
</feature>
<feature type="sequence conflict" description="In Ref. 1; AAF78217." evidence="11" ref="1">
    <original>NEFSGAA</original>
    <variation>KPNS</variation>
    <location>
        <begin position="557"/>
        <end position="563"/>
    </location>
</feature>
<feature type="sequence conflict" description="In Ref. 1; AAF78217." evidence="11" ref="1">
    <original>KR</original>
    <variation>G</variation>
    <location>
        <begin position="602"/>
        <end position="603"/>
    </location>
</feature>
<feature type="sequence conflict" description="In Ref. 1; AAF78217." evidence="11" ref="1">
    <original>Y</original>
    <variation>F</variation>
    <location>
        <position position="606"/>
    </location>
</feature>
<feature type="sequence conflict" description="In Ref. 1; AAF78217." evidence="11" ref="1">
    <original>A</original>
    <variation>AAINIR</variation>
    <location>
        <position position="645"/>
    </location>
</feature>
<feature type="sequence conflict" description="In Ref. 1; AAF78217." evidence="11" ref="1">
    <original>Q</original>
    <variation>H</variation>
    <location>
        <position position="655"/>
    </location>
</feature>
<feature type="sequence conflict" description="In Ref. 1; AAF78217." evidence="11" ref="1">
    <original>R</original>
    <variation>P</variation>
    <location>
        <position position="658"/>
    </location>
</feature>
<feature type="sequence conflict" description="In Ref. 1; AAF78217." evidence="11" ref="1">
    <original>D</original>
    <variation>H</variation>
    <location>
        <position position="695"/>
    </location>
</feature>
<feature type="sequence conflict" description="In Ref. 1; AAF78217." evidence="11" ref="1">
    <original>A</original>
    <variation>P</variation>
    <location>
        <position position="707"/>
    </location>
</feature>
<feature type="sequence conflict" description="In Ref. 1; AAF78217." evidence="11" ref="1">
    <original>F</original>
    <variation>I</variation>
    <location>
        <position position="717"/>
    </location>
</feature>
<feature type="sequence conflict" description="In Ref. 1; AAF78217." evidence="11" ref="1">
    <original>Y</original>
    <variation>YY</variation>
    <location>
        <position position="736"/>
    </location>
</feature>
<feature type="sequence conflict" description="In Ref. 1; AAF78217." evidence="11" ref="1">
    <original>RKV</original>
    <variation>GIL</variation>
    <location>
        <begin position="756"/>
        <end position="758"/>
    </location>
</feature>